<proteinExistence type="inferred from homology"/>
<accession>A9AEN5</accession>
<keyword id="KW-0119">Carbohydrate metabolism</keyword>
<keyword id="KW-0963">Cytoplasm</keyword>
<keyword id="KW-0378">Hydrolase</keyword>
<keyword id="KW-0460">Magnesium</keyword>
<keyword id="KW-0479">Metal-binding</keyword>
<keyword id="KW-1185">Reference proteome</keyword>
<evidence type="ECO:0000255" key="1">
    <source>
        <dbReference type="HAMAP-Rule" id="MF_01855"/>
    </source>
</evidence>
<comment type="catalytic activity">
    <reaction evidence="1">
        <text>beta-D-fructose 1,6-bisphosphate + H2O = beta-D-fructose 6-phosphate + phosphate</text>
        <dbReference type="Rhea" id="RHEA:11064"/>
        <dbReference type="ChEBI" id="CHEBI:15377"/>
        <dbReference type="ChEBI" id="CHEBI:32966"/>
        <dbReference type="ChEBI" id="CHEBI:43474"/>
        <dbReference type="ChEBI" id="CHEBI:57634"/>
        <dbReference type="EC" id="3.1.3.11"/>
    </reaction>
</comment>
<comment type="cofactor">
    <cofactor evidence="1">
        <name>Mg(2+)</name>
        <dbReference type="ChEBI" id="CHEBI:18420"/>
    </cofactor>
    <text evidence="1">Binds 2 magnesium ions per subunit.</text>
</comment>
<comment type="pathway">
    <text evidence="1">Carbohydrate biosynthesis; gluconeogenesis.</text>
</comment>
<comment type="subunit">
    <text evidence="1">Homotetramer.</text>
</comment>
<comment type="subcellular location">
    <subcellularLocation>
        <location evidence="1">Cytoplasm</location>
    </subcellularLocation>
</comment>
<comment type="similarity">
    <text evidence="1">Belongs to the FBPase class 1 family.</text>
</comment>
<sequence length="337" mass="37162">MSIARRTTLSKFLIEQQRETNNLPADLRLLIEVVARACKAISYNVSKGALGDALGTAGSENVQGEVQKKLDILSNEILLDANEWGGNLAAMASEEMETFFPIPANYPRGEYLLVFDPLDGSSNIDVNVSIGTIFSVLRCPDGKQATEESFLQPGTQQVAAGYAVYGPQTVFVLTTGNGVNCFTLDREVGSWVLTQSNMQIPADTREYAINASNARHWYDPVKRYVDELNAGKDGPRGDNFNMRWIASMVADVHRILNRGGIFMYPADKRTPDRPGKLRLMYEANPMAFIVEQAGGAATTGTQRIMEVQPTGLHQRVPVFLGSKNEVERVTAYHHESQ</sequence>
<feature type="chain" id="PRO_0000364494" description="Fructose-1,6-bisphosphatase class 1">
    <location>
        <begin position="1"/>
        <end position="337"/>
    </location>
</feature>
<feature type="binding site" evidence="1">
    <location>
        <position position="94"/>
    </location>
    <ligand>
        <name>Mg(2+)</name>
        <dbReference type="ChEBI" id="CHEBI:18420"/>
        <label>1</label>
    </ligand>
</feature>
<feature type="binding site" evidence="1">
    <location>
        <position position="116"/>
    </location>
    <ligand>
        <name>Mg(2+)</name>
        <dbReference type="ChEBI" id="CHEBI:18420"/>
        <label>1</label>
    </ligand>
</feature>
<feature type="binding site" evidence="1">
    <location>
        <position position="116"/>
    </location>
    <ligand>
        <name>Mg(2+)</name>
        <dbReference type="ChEBI" id="CHEBI:18420"/>
        <label>2</label>
    </ligand>
</feature>
<feature type="binding site" evidence="1">
    <location>
        <position position="118"/>
    </location>
    <ligand>
        <name>Mg(2+)</name>
        <dbReference type="ChEBI" id="CHEBI:18420"/>
        <label>1</label>
    </ligand>
</feature>
<feature type="binding site" evidence="1">
    <location>
        <begin position="119"/>
        <end position="122"/>
    </location>
    <ligand>
        <name>substrate</name>
    </ligand>
</feature>
<feature type="binding site" evidence="1">
    <location>
        <position position="119"/>
    </location>
    <ligand>
        <name>Mg(2+)</name>
        <dbReference type="ChEBI" id="CHEBI:18420"/>
        <label>2</label>
    </ligand>
</feature>
<feature type="binding site" evidence="1">
    <location>
        <position position="210"/>
    </location>
    <ligand>
        <name>substrate</name>
    </ligand>
</feature>
<feature type="binding site" evidence="1">
    <location>
        <position position="276"/>
    </location>
    <ligand>
        <name>substrate</name>
    </ligand>
</feature>
<feature type="binding site" evidence="1">
    <location>
        <position position="282"/>
    </location>
    <ligand>
        <name>Mg(2+)</name>
        <dbReference type="ChEBI" id="CHEBI:18420"/>
        <label>2</label>
    </ligand>
</feature>
<organism>
    <name type="scientific">Burkholderia multivorans (strain ATCC 17616 / 249)</name>
    <dbReference type="NCBI Taxonomy" id="395019"/>
    <lineage>
        <taxon>Bacteria</taxon>
        <taxon>Pseudomonadati</taxon>
        <taxon>Pseudomonadota</taxon>
        <taxon>Betaproteobacteria</taxon>
        <taxon>Burkholderiales</taxon>
        <taxon>Burkholderiaceae</taxon>
        <taxon>Burkholderia</taxon>
        <taxon>Burkholderia cepacia complex</taxon>
    </lineage>
</organism>
<name>F16PA_BURM1</name>
<gene>
    <name evidence="1" type="primary">fbp</name>
    <name type="ordered locus">Bmul_2381</name>
    <name type="ordered locus">BMULJ_00860</name>
</gene>
<reference key="1">
    <citation type="submission" date="2007-10" db="EMBL/GenBank/DDBJ databases">
        <title>Complete sequence of chromosome 1 of Burkholderia multivorans ATCC 17616.</title>
        <authorList>
            <person name="Copeland A."/>
            <person name="Lucas S."/>
            <person name="Lapidus A."/>
            <person name="Barry K."/>
            <person name="Glavina del Rio T."/>
            <person name="Dalin E."/>
            <person name="Tice H."/>
            <person name="Pitluck S."/>
            <person name="Chain P."/>
            <person name="Malfatti S."/>
            <person name="Shin M."/>
            <person name="Vergez L."/>
            <person name="Schmutz J."/>
            <person name="Larimer F."/>
            <person name="Land M."/>
            <person name="Hauser L."/>
            <person name="Kyrpides N."/>
            <person name="Kim E."/>
            <person name="Tiedje J."/>
            <person name="Richardson P."/>
        </authorList>
    </citation>
    <scope>NUCLEOTIDE SEQUENCE [LARGE SCALE GENOMIC DNA]</scope>
    <source>
        <strain>ATCC 17616 / 249</strain>
    </source>
</reference>
<reference key="2">
    <citation type="submission" date="2007-04" db="EMBL/GenBank/DDBJ databases">
        <title>Complete genome sequence of Burkholderia multivorans ATCC 17616.</title>
        <authorList>
            <person name="Ohtsubo Y."/>
            <person name="Yamashita A."/>
            <person name="Kurokawa K."/>
            <person name="Takami H."/>
            <person name="Yuhara S."/>
            <person name="Nishiyama E."/>
            <person name="Endo R."/>
            <person name="Miyazaki R."/>
            <person name="Ono A."/>
            <person name="Yano K."/>
            <person name="Ito M."/>
            <person name="Sota M."/>
            <person name="Yuji N."/>
            <person name="Hattori M."/>
            <person name="Tsuda M."/>
        </authorList>
    </citation>
    <scope>NUCLEOTIDE SEQUENCE [LARGE SCALE GENOMIC DNA]</scope>
    <source>
        <strain>ATCC 17616 / 249</strain>
    </source>
</reference>
<protein>
    <recommendedName>
        <fullName evidence="1">Fructose-1,6-bisphosphatase class 1</fullName>
        <shortName evidence="1">FBPase class 1</shortName>
        <ecNumber evidence="1">3.1.3.11</ecNumber>
    </recommendedName>
    <alternativeName>
        <fullName evidence="1">D-fructose-1,6-bisphosphate 1-phosphohydrolase class 1</fullName>
    </alternativeName>
</protein>
<dbReference type="EC" id="3.1.3.11" evidence="1"/>
<dbReference type="EMBL" id="CP000868">
    <property type="protein sequence ID" value="ABX16066.1"/>
    <property type="molecule type" value="Genomic_DNA"/>
</dbReference>
<dbReference type="EMBL" id="AP009385">
    <property type="protein sequence ID" value="BAG42813.1"/>
    <property type="molecule type" value="Genomic_DNA"/>
</dbReference>
<dbReference type="RefSeq" id="WP_006400763.1">
    <property type="nucleotide sequence ID" value="NC_010804.1"/>
</dbReference>
<dbReference type="SMR" id="A9AEN5"/>
<dbReference type="STRING" id="395019.BMULJ_00860"/>
<dbReference type="KEGG" id="bmj:BMULJ_00860"/>
<dbReference type="KEGG" id="bmu:Bmul_2381"/>
<dbReference type="eggNOG" id="COG0158">
    <property type="taxonomic scope" value="Bacteria"/>
</dbReference>
<dbReference type="HOGENOM" id="CLU_039977_0_0_4"/>
<dbReference type="UniPathway" id="UPA00138"/>
<dbReference type="Proteomes" id="UP000008815">
    <property type="component" value="Chromosome 1"/>
</dbReference>
<dbReference type="GO" id="GO:0005829">
    <property type="term" value="C:cytosol"/>
    <property type="evidence" value="ECO:0007669"/>
    <property type="project" value="TreeGrafter"/>
</dbReference>
<dbReference type="GO" id="GO:0042132">
    <property type="term" value="F:fructose 1,6-bisphosphate 1-phosphatase activity"/>
    <property type="evidence" value="ECO:0007669"/>
    <property type="project" value="UniProtKB-UniRule"/>
</dbReference>
<dbReference type="GO" id="GO:0000287">
    <property type="term" value="F:magnesium ion binding"/>
    <property type="evidence" value="ECO:0007669"/>
    <property type="project" value="UniProtKB-UniRule"/>
</dbReference>
<dbReference type="GO" id="GO:0030388">
    <property type="term" value="P:fructose 1,6-bisphosphate metabolic process"/>
    <property type="evidence" value="ECO:0007669"/>
    <property type="project" value="TreeGrafter"/>
</dbReference>
<dbReference type="GO" id="GO:0006002">
    <property type="term" value="P:fructose 6-phosphate metabolic process"/>
    <property type="evidence" value="ECO:0007669"/>
    <property type="project" value="TreeGrafter"/>
</dbReference>
<dbReference type="GO" id="GO:0006000">
    <property type="term" value="P:fructose metabolic process"/>
    <property type="evidence" value="ECO:0007669"/>
    <property type="project" value="TreeGrafter"/>
</dbReference>
<dbReference type="GO" id="GO:0006094">
    <property type="term" value="P:gluconeogenesis"/>
    <property type="evidence" value="ECO:0007669"/>
    <property type="project" value="UniProtKB-UniRule"/>
</dbReference>
<dbReference type="GO" id="GO:0005986">
    <property type="term" value="P:sucrose biosynthetic process"/>
    <property type="evidence" value="ECO:0007669"/>
    <property type="project" value="TreeGrafter"/>
</dbReference>
<dbReference type="CDD" id="cd00354">
    <property type="entry name" value="FBPase"/>
    <property type="match status" value="1"/>
</dbReference>
<dbReference type="FunFam" id="3.30.540.10:FF:000006">
    <property type="entry name" value="Fructose-1,6-bisphosphatase class 1"/>
    <property type="match status" value="1"/>
</dbReference>
<dbReference type="FunFam" id="3.40.190.80:FF:000011">
    <property type="entry name" value="Fructose-1,6-bisphosphatase class 1"/>
    <property type="match status" value="1"/>
</dbReference>
<dbReference type="Gene3D" id="3.40.190.80">
    <property type="match status" value="1"/>
</dbReference>
<dbReference type="Gene3D" id="3.30.540.10">
    <property type="entry name" value="Fructose-1,6-Bisphosphatase, subunit A, domain 1"/>
    <property type="match status" value="1"/>
</dbReference>
<dbReference type="HAMAP" id="MF_01855">
    <property type="entry name" value="FBPase_class1"/>
    <property type="match status" value="1"/>
</dbReference>
<dbReference type="InterPro" id="IPR044015">
    <property type="entry name" value="FBPase_C_dom"/>
</dbReference>
<dbReference type="InterPro" id="IPR000146">
    <property type="entry name" value="FBPase_class-1"/>
</dbReference>
<dbReference type="InterPro" id="IPR033391">
    <property type="entry name" value="FBPase_N"/>
</dbReference>
<dbReference type="InterPro" id="IPR028343">
    <property type="entry name" value="FBPtase"/>
</dbReference>
<dbReference type="NCBIfam" id="NF006778">
    <property type="entry name" value="PRK09293.1-1"/>
    <property type="match status" value="1"/>
</dbReference>
<dbReference type="NCBIfam" id="NF006779">
    <property type="entry name" value="PRK09293.1-3"/>
    <property type="match status" value="1"/>
</dbReference>
<dbReference type="NCBIfam" id="NF006780">
    <property type="entry name" value="PRK09293.1-4"/>
    <property type="match status" value="1"/>
</dbReference>
<dbReference type="PANTHER" id="PTHR11556">
    <property type="entry name" value="FRUCTOSE-1,6-BISPHOSPHATASE-RELATED"/>
    <property type="match status" value="1"/>
</dbReference>
<dbReference type="PANTHER" id="PTHR11556:SF35">
    <property type="entry name" value="SEDOHEPTULOSE-1,7-BISPHOSPHATASE, CHLOROPLASTIC"/>
    <property type="match status" value="1"/>
</dbReference>
<dbReference type="Pfam" id="PF00316">
    <property type="entry name" value="FBPase"/>
    <property type="match status" value="1"/>
</dbReference>
<dbReference type="Pfam" id="PF18913">
    <property type="entry name" value="FBPase_C"/>
    <property type="match status" value="1"/>
</dbReference>
<dbReference type="PIRSF" id="PIRSF500210">
    <property type="entry name" value="FBPtase"/>
    <property type="match status" value="1"/>
</dbReference>
<dbReference type="PIRSF" id="PIRSF000904">
    <property type="entry name" value="FBPtase_SBPase"/>
    <property type="match status" value="1"/>
</dbReference>
<dbReference type="PRINTS" id="PR00115">
    <property type="entry name" value="F16BPHPHTASE"/>
</dbReference>
<dbReference type="SUPFAM" id="SSF56655">
    <property type="entry name" value="Carbohydrate phosphatase"/>
    <property type="match status" value="1"/>
</dbReference>